<reference key="1">
    <citation type="submission" date="2009-02" db="EMBL/GenBank/DDBJ databases">
        <title>Vibrio splendidus str. LGP32 complete genome.</title>
        <authorList>
            <person name="Mazel D."/>
            <person name="Le Roux F."/>
        </authorList>
    </citation>
    <scope>NUCLEOTIDE SEQUENCE [LARGE SCALE GENOMIC DNA]</scope>
    <source>
        <strain>LGP32</strain>
    </source>
</reference>
<feature type="chain" id="PRO_1000185782" description="Na(+)/H(+) antiporter NhaB">
    <location>
        <begin position="1"/>
        <end position="530"/>
    </location>
</feature>
<feature type="transmembrane region" description="Helical" evidence="1">
    <location>
        <begin position="13"/>
        <end position="33"/>
    </location>
</feature>
<feature type="transmembrane region" description="Helical" evidence="1">
    <location>
        <begin position="98"/>
        <end position="118"/>
    </location>
</feature>
<feature type="transmembrane region" description="Helical" evidence="1">
    <location>
        <begin position="123"/>
        <end position="145"/>
    </location>
</feature>
<feature type="transmembrane region" description="Helical" evidence="1">
    <location>
        <begin position="149"/>
        <end position="166"/>
    </location>
</feature>
<feature type="transmembrane region" description="Helical" evidence="1">
    <location>
        <begin position="205"/>
        <end position="225"/>
    </location>
</feature>
<feature type="transmembrane region" description="Helical" evidence="1">
    <location>
        <begin position="238"/>
        <end position="258"/>
    </location>
</feature>
<feature type="transmembrane region" description="Helical" evidence="1">
    <location>
        <begin position="308"/>
        <end position="328"/>
    </location>
</feature>
<feature type="transmembrane region" description="Helical" evidence="1">
    <location>
        <begin position="330"/>
        <end position="350"/>
    </location>
</feature>
<feature type="transmembrane region" description="Helical" evidence="1">
    <location>
        <begin position="356"/>
        <end position="376"/>
    </location>
</feature>
<feature type="transmembrane region" description="Helical" evidence="1">
    <location>
        <begin position="393"/>
        <end position="413"/>
    </location>
</feature>
<feature type="transmembrane region" description="Helical" evidence="1">
    <location>
        <begin position="451"/>
        <end position="471"/>
    </location>
</feature>
<feature type="transmembrane region" description="Helical" evidence="1">
    <location>
        <begin position="480"/>
        <end position="500"/>
    </location>
</feature>
<sequence length="530" mass="57639">MPMSLGNAFIKNFLGKAPDWYKLAIISFLIINPFVFFLVDPFVAGWLLVVEFIFTLAMALKCYPLQPGGLLAIQAVAIGMTKPEMVYHELQANLPVLLLLVFMVAGIYFMKELLLFIFTKILLGIQSKILLSVAFCVAAAFLSAFLDALTVIAVVISVAVGFYSIYHKVASGKGTTSAHDHTHDEEISELTRDDLENYRAFLRSLLMHAGVGTALGGVMTMVGEPQNLVIAKQAGWEFGEFIIRMLPVTLPVFFCGILTCALVEKFKVFGYGAELPNNVRQILVEFDNKERANRTKQDVAKLWVQSAIAVWLIVGLALHVAEVGLIGLSVIILATAFTGVIEEHSMGKAFEEALPFTALLAVFFAVVAVIIDQALFKPVIDAVLHVEDKGAQLALFYVANGILSMVSDNVFVGTVYINEVKTALVEGVITRDQFDLLAVAINTGTNLPSVATPNGQAAFLFLLTSALAPLIRLSYGRMVIMALPYTIVLALVGLAGIVFFVEPMTAWFYDAGWIIHRTGEVVAPVISGGH</sequence>
<protein>
    <recommendedName>
        <fullName evidence="1">Na(+)/H(+) antiporter NhaB</fullName>
    </recommendedName>
    <alternativeName>
        <fullName evidence="1">Sodium/proton antiporter NhaB</fullName>
    </alternativeName>
</protein>
<proteinExistence type="inferred from homology"/>
<organism>
    <name type="scientific">Vibrio atlanticus (strain LGP32)</name>
    <name type="common">Vibrio splendidus (strain Mel32)</name>
    <dbReference type="NCBI Taxonomy" id="575788"/>
    <lineage>
        <taxon>Bacteria</taxon>
        <taxon>Pseudomonadati</taxon>
        <taxon>Pseudomonadota</taxon>
        <taxon>Gammaproteobacteria</taxon>
        <taxon>Vibrionales</taxon>
        <taxon>Vibrionaceae</taxon>
        <taxon>Vibrio</taxon>
    </lineage>
</organism>
<dbReference type="EMBL" id="FM954972">
    <property type="protein sequence ID" value="CAV18057.1"/>
    <property type="molecule type" value="Genomic_DNA"/>
</dbReference>
<dbReference type="SMR" id="B7VLW5"/>
<dbReference type="STRING" id="575788.VS_1006"/>
<dbReference type="KEGG" id="vsp:VS_1006"/>
<dbReference type="PATRIC" id="fig|575788.5.peg.2329"/>
<dbReference type="eggNOG" id="COG3067">
    <property type="taxonomic scope" value="Bacteria"/>
</dbReference>
<dbReference type="HOGENOM" id="CLU_041110_0_0_6"/>
<dbReference type="Proteomes" id="UP000009100">
    <property type="component" value="Chromosome 1"/>
</dbReference>
<dbReference type="GO" id="GO:0005886">
    <property type="term" value="C:plasma membrane"/>
    <property type="evidence" value="ECO:0007669"/>
    <property type="project" value="UniProtKB-SubCell"/>
</dbReference>
<dbReference type="GO" id="GO:0015385">
    <property type="term" value="F:sodium:proton antiporter activity"/>
    <property type="evidence" value="ECO:0007669"/>
    <property type="project" value="InterPro"/>
</dbReference>
<dbReference type="HAMAP" id="MF_01599">
    <property type="entry name" value="NhaB"/>
    <property type="match status" value="1"/>
</dbReference>
<dbReference type="InterPro" id="IPR004671">
    <property type="entry name" value="Na+/H+_antiporter_NhaB"/>
</dbReference>
<dbReference type="NCBIfam" id="TIGR00774">
    <property type="entry name" value="NhaB"/>
    <property type="match status" value="1"/>
</dbReference>
<dbReference type="NCBIfam" id="NF007093">
    <property type="entry name" value="PRK09547.1"/>
    <property type="match status" value="1"/>
</dbReference>
<dbReference type="PANTHER" id="PTHR43302:SF1">
    <property type="entry name" value="NA(+)_H(+) ANTIPORTER NHAB"/>
    <property type="match status" value="1"/>
</dbReference>
<dbReference type="PANTHER" id="PTHR43302">
    <property type="entry name" value="TRANSPORTER ARSB-RELATED"/>
    <property type="match status" value="1"/>
</dbReference>
<dbReference type="Pfam" id="PF06450">
    <property type="entry name" value="NhaB"/>
    <property type="match status" value="1"/>
</dbReference>
<comment type="function">
    <text evidence="1">Na(+)/H(+) antiporter that extrudes sodium in exchange for external protons.</text>
</comment>
<comment type="catalytic activity">
    <reaction evidence="1">
        <text>2 Na(+)(in) + 3 H(+)(out) = 2 Na(+)(out) + 3 H(+)(in)</text>
        <dbReference type="Rhea" id="RHEA:29247"/>
        <dbReference type="ChEBI" id="CHEBI:15378"/>
        <dbReference type="ChEBI" id="CHEBI:29101"/>
    </reaction>
    <physiologicalReaction direction="left-to-right" evidence="1">
        <dbReference type="Rhea" id="RHEA:29248"/>
    </physiologicalReaction>
</comment>
<comment type="subcellular location">
    <subcellularLocation>
        <location evidence="1">Cell inner membrane</location>
        <topology evidence="1">Multi-pass membrane protein</topology>
    </subcellularLocation>
</comment>
<comment type="similarity">
    <text evidence="1">Belongs to the NhaB Na(+)/H(+) (TC 2.A.34) antiporter family.</text>
</comment>
<accession>B7VLW5</accession>
<keyword id="KW-0050">Antiport</keyword>
<keyword id="KW-0997">Cell inner membrane</keyword>
<keyword id="KW-1003">Cell membrane</keyword>
<keyword id="KW-0406">Ion transport</keyword>
<keyword id="KW-0472">Membrane</keyword>
<keyword id="KW-0915">Sodium</keyword>
<keyword id="KW-0739">Sodium transport</keyword>
<keyword id="KW-0812">Transmembrane</keyword>
<keyword id="KW-1133">Transmembrane helix</keyword>
<keyword id="KW-0813">Transport</keyword>
<name>NHAB_VIBA3</name>
<evidence type="ECO:0000255" key="1">
    <source>
        <dbReference type="HAMAP-Rule" id="MF_01599"/>
    </source>
</evidence>
<gene>
    <name evidence="1" type="primary">nhaB</name>
    <name type="ordered locus">VS_1006</name>
</gene>